<sequence>MALTAEQKKEILRSYGLHETDTGSPEAQIALLTKRIADLTEHLKVHKHDHHSRRGLLLLVGRRRRLIKYISQIDVERYRSLIERLGLRR</sequence>
<comment type="function">
    <text evidence="1">One of the primary rRNA binding proteins, it binds directly to 16S rRNA where it helps nucleate assembly of the platform of the 30S subunit by binding and bridging several RNA helices of the 16S rRNA.</text>
</comment>
<comment type="function">
    <text evidence="1">Forms an intersubunit bridge (bridge B4) with the 23S rRNA of the 50S subunit in the ribosome.</text>
</comment>
<comment type="subunit">
    <text evidence="1">Part of the 30S ribosomal subunit. Forms a bridge to the 50S subunit in the 70S ribosome, contacting the 23S rRNA.</text>
</comment>
<comment type="similarity">
    <text evidence="1">Belongs to the universal ribosomal protein uS15 family.</text>
</comment>
<dbReference type="EMBL" id="LT708304">
    <property type="protein sequence ID" value="SIU01426.1"/>
    <property type="molecule type" value="Genomic_DNA"/>
</dbReference>
<dbReference type="RefSeq" id="NP_856454.1">
    <property type="nucleotide sequence ID" value="NC_002945.3"/>
</dbReference>
<dbReference type="RefSeq" id="WP_003414128.1">
    <property type="nucleotide sequence ID" value="NC_002945.4"/>
</dbReference>
<dbReference type="SMR" id="P66430"/>
<dbReference type="GeneID" id="45426774"/>
<dbReference type="KEGG" id="mbo:BQ2027_MB2808C"/>
<dbReference type="PATRIC" id="fig|233413.5.peg.3079"/>
<dbReference type="Proteomes" id="UP000001419">
    <property type="component" value="Chromosome"/>
</dbReference>
<dbReference type="GO" id="GO:0022627">
    <property type="term" value="C:cytosolic small ribosomal subunit"/>
    <property type="evidence" value="ECO:0007669"/>
    <property type="project" value="TreeGrafter"/>
</dbReference>
<dbReference type="GO" id="GO:0019843">
    <property type="term" value="F:rRNA binding"/>
    <property type="evidence" value="ECO:0007669"/>
    <property type="project" value="UniProtKB-UniRule"/>
</dbReference>
<dbReference type="GO" id="GO:0003735">
    <property type="term" value="F:structural constituent of ribosome"/>
    <property type="evidence" value="ECO:0007669"/>
    <property type="project" value="InterPro"/>
</dbReference>
<dbReference type="GO" id="GO:0006412">
    <property type="term" value="P:translation"/>
    <property type="evidence" value="ECO:0007669"/>
    <property type="project" value="UniProtKB-UniRule"/>
</dbReference>
<dbReference type="CDD" id="cd00353">
    <property type="entry name" value="Ribosomal_S15p_S13e"/>
    <property type="match status" value="1"/>
</dbReference>
<dbReference type="FunFam" id="1.10.287.10:FF:000002">
    <property type="entry name" value="30S ribosomal protein S15"/>
    <property type="match status" value="1"/>
</dbReference>
<dbReference type="Gene3D" id="6.10.250.3130">
    <property type="match status" value="1"/>
</dbReference>
<dbReference type="Gene3D" id="1.10.287.10">
    <property type="entry name" value="S15/NS1, RNA-binding"/>
    <property type="match status" value="1"/>
</dbReference>
<dbReference type="HAMAP" id="MF_01343_B">
    <property type="entry name" value="Ribosomal_uS15_B"/>
    <property type="match status" value="1"/>
</dbReference>
<dbReference type="InterPro" id="IPR000589">
    <property type="entry name" value="Ribosomal_uS15"/>
</dbReference>
<dbReference type="InterPro" id="IPR005290">
    <property type="entry name" value="Ribosomal_uS15_bac-type"/>
</dbReference>
<dbReference type="InterPro" id="IPR009068">
    <property type="entry name" value="uS15_NS1_RNA-bd_sf"/>
</dbReference>
<dbReference type="NCBIfam" id="TIGR00952">
    <property type="entry name" value="S15_bact"/>
    <property type="match status" value="1"/>
</dbReference>
<dbReference type="PANTHER" id="PTHR23321">
    <property type="entry name" value="RIBOSOMAL PROTEIN S15, BACTERIAL AND ORGANELLAR"/>
    <property type="match status" value="1"/>
</dbReference>
<dbReference type="PANTHER" id="PTHR23321:SF26">
    <property type="entry name" value="SMALL RIBOSOMAL SUBUNIT PROTEIN US15M"/>
    <property type="match status" value="1"/>
</dbReference>
<dbReference type="Pfam" id="PF00312">
    <property type="entry name" value="Ribosomal_S15"/>
    <property type="match status" value="1"/>
</dbReference>
<dbReference type="SMART" id="SM01387">
    <property type="entry name" value="Ribosomal_S15"/>
    <property type="match status" value="1"/>
</dbReference>
<dbReference type="SUPFAM" id="SSF47060">
    <property type="entry name" value="S15/NS1 RNA-binding domain"/>
    <property type="match status" value="1"/>
</dbReference>
<dbReference type="PROSITE" id="PS00362">
    <property type="entry name" value="RIBOSOMAL_S15"/>
    <property type="match status" value="1"/>
</dbReference>
<feature type="chain" id="PRO_0000115470" description="Small ribosomal subunit protein uS15">
    <location>
        <begin position="1"/>
        <end position="89"/>
    </location>
</feature>
<proteinExistence type="inferred from homology"/>
<reference key="1">
    <citation type="journal article" date="2003" name="Proc. Natl. Acad. Sci. U.S.A.">
        <title>The complete genome sequence of Mycobacterium bovis.</title>
        <authorList>
            <person name="Garnier T."/>
            <person name="Eiglmeier K."/>
            <person name="Camus J.-C."/>
            <person name="Medina N."/>
            <person name="Mansoor H."/>
            <person name="Pryor M."/>
            <person name="Duthoy S."/>
            <person name="Grondin S."/>
            <person name="Lacroix C."/>
            <person name="Monsempe C."/>
            <person name="Simon S."/>
            <person name="Harris B."/>
            <person name="Atkin R."/>
            <person name="Doggett J."/>
            <person name="Mayes R."/>
            <person name="Keating L."/>
            <person name="Wheeler P.R."/>
            <person name="Parkhill J."/>
            <person name="Barrell B.G."/>
            <person name="Cole S.T."/>
            <person name="Gordon S.V."/>
            <person name="Hewinson R.G."/>
        </authorList>
    </citation>
    <scope>NUCLEOTIDE SEQUENCE [LARGE SCALE GENOMIC DNA]</scope>
    <source>
        <strain>ATCC BAA-935 / AF2122/97</strain>
    </source>
</reference>
<reference key="2">
    <citation type="journal article" date="2017" name="Genome Announc.">
        <title>Updated reference genome sequence and annotation of Mycobacterium bovis AF2122/97.</title>
        <authorList>
            <person name="Malone K.M."/>
            <person name="Farrell D."/>
            <person name="Stuber T.P."/>
            <person name="Schubert O.T."/>
            <person name="Aebersold R."/>
            <person name="Robbe-Austerman S."/>
            <person name="Gordon S.V."/>
        </authorList>
    </citation>
    <scope>NUCLEOTIDE SEQUENCE [LARGE SCALE GENOMIC DNA]</scope>
    <scope>GENOME REANNOTATION</scope>
    <source>
        <strain>ATCC BAA-935 / AF2122/97</strain>
    </source>
</reference>
<gene>
    <name evidence="1" type="primary">rpsO</name>
    <name type="ordered locus">BQ2027_MB2808C</name>
</gene>
<accession>P66430</accession>
<accession>A0A1R3Y302</accession>
<accession>O33327</accession>
<accession>X2BLL1</accession>
<protein>
    <recommendedName>
        <fullName evidence="1">Small ribosomal subunit protein uS15</fullName>
    </recommendedName>
    <alternativeName>
        <fullName evidence="2">30S ribosomal protein S15</fullName>
    </alternativeName>
</protein>
<name>RS15_MYCBO</name>
<keyword id="KW-1185">Reference proteome</keyword>
<keyword id="KW-0687">Ribonucleoprotein</keyword>
<keyword id="KW-0689">Ribosomal protein</keyword>
<keyword id="KW-0694">RNA-binding</keyword>
<keyword id="KW-0699">rRNA-binding</keyword>
<organism>
    <name type="scientific">Mycobacterium bovis (strain ATCC BAA-935 / AF2122/97)</name>
    <dbReference type="NCBI Taxonomy" id="233413"/>
    <lineage>
        <taxon>Bacteria</taxon>
        <taxon>Bacillati</taxon>
        <taxon>Actinomycetota</taxon>
        <taxon>Actinomycetes</taxon>
        <taxon>Mycobacteriales</taxon>
        <taxon>Mycobacteriaceae</taxon>
        <taxon>Mycobacterium</taxon>
        <taxon>Mycobacterium tuberculosis complex</taxon>
    </lineage>
</organism>
<evidence type="ECO:0000255" key="1">
    <source>
        <dbReference type="HAMAP-Rule" id="MF_01343"/>
    </source>
</evidence>
<evidence type="ECO:0000305" key="2"/>